<name>RL21_SALTO</name>
<accession>A4XAG3</accession>
<gene>
    <name evidence="1" type="primary">rplU</name>
    <name type="ordered locus">Strop_3481</name>
</gene>
<proteinExistence type="inferred from homology"/>
<organism>
    <name type="scientific">Salinispora tropica (strain ATCC BAA-916 / DSM 44818 / JCM 13857 / NBRC 105044 / CNB-440)</name>
    <dbReference type="NCBI Taxonomy" id="369723"/>
    <lineage>
        <taxon>Bacteria</taxon>
        <taxon>Bacillati</taxon>
        <taxon>Actinomycetota</taxon>
        <taxon>Actinomycetes</taxon>
        <taxon>Micromonosporales</taxon>
        <taxon>Micromonosporaceae</taxon>
        <taxon>Salinispora</taxon>
    </lineage>
</organism>
<feature type="chain" id="PRO_1000086997" description="Large ribosomal subunit protein bL21">
    <location>
        <begin position="1"/>
        <end position="104"/>
    </location>
</feature>
<dbReference type="EMBL" id="CP000667">
    <property type="protein sequence ID" value="ABP55912.1"/>
    <property type="molecule type" value="Genomic_DNA"/>
</dbReference>
<dbReference type="RefSeq" id="WP_012014687.1">
    <property type="nucleotide sequence ID" value="NC_009380.1"/>
</dbReference>
<dbReference type="SMR" id="A4XAG3"/>
<dbReference type="STRING" id="369723.Strop_3481"/>
<dbReference type="KEGG" id="stp:Strop_3481"/>
<dbReference type="PATRIC" id="fig|369723.5.peg.3591"/>
<dbReference type="eggNOG" id="COG0261">
    <property type="taxonomic scope" value="Bacteria"/>
</dbReference>
<dbReference type="HOGENOM" id="CLU_061463_3_2_11"/>
<dbReference type="Proteomes" id="UP000000235">
    <property type="component" value="Chromosome"/>
</dbReference>
<dbReference type="GO" id="GO:0005737">
    <property type="term" value="C:cytoplasm"/>
    <property type="evidence" value="ECO:0007669"/>
    <property type="project" value="UniProtKB-ARBA"/>
</dbReference>
<dbReference type="GO" id="GO:1990904">
    <property type="term" value="C:ribonucleoprotein complex"/>
    <property type="evidence" value="ECO:0007669"/>
    <property type="project" value="UniProtKB-KW"/>
</dbReference>
<dbReference type="GO" id="GO:0005840">
    <property type="term" value="C:ribosome"/>
    <property type="evidence" value="ECO:0007669"/>
    <property type="project" value="UniProtKB-KW"/>
</dbReference>
<dbReference type="GO" id="GO:0019843">
    <property type="term" value="F:rRNA binding"/>
    <property type="evidence" value="ECO:0007669"/>
    <property type="project" value="UniProtKB-UniRule"/>
</dbReference>
<dbReference type="GO" id="GO:0003735">
    <property type="term" value="F:structural constituent of ribosome"/>
    <property type="evidence" value="ECO:0007669"/>
    <property type="project" value="InterPro"/>
</dbReference>
<dbReference type="GO" id="GO:0006412">
    <property type="term" value="P:translation"/>
    <property type="evidence" value="ECO:0007669"/>
    <property type="project" value="UniProtKB-UniRule"/>
</dbReference>
<dbReference type="HAMAP" id="MF_01363">
    <property type="entry name" value="Ribosomal_bL21"/>
    <property type="match status" value="1"/>
</dbReference>
<dbReference type="InterPro" id="IPR028909">
    <property type="entry name" value="bL21-like"/>
</dbReference>
<dbReference type="InterPro" id="IPR036164">
    <property type="entry name" value="bL21-like_sf"/>
</dbReference>
<dbReference type="InterPro" id="IPR001787">
    <property type="entry name" value="Ribosomal_bL21"/>
</dbReference>
<dbReference type="InterPro" id="IPR018258">
    <property type="entry name" value="Ribosomal_bL21_CS"/>
</dbReference>
<dbReference type="NCBIfam" id="TIGR00061">
    <property type="entry name" value="L21"/>
    <property type="match status" value="1"/>
</dbReference>
<dbReference type="PANTHER" id="PTHR21349">
    <property type="entry name" value="50S RIBOSOMAL PROTEIN L21"/>
    <property type="match status" value="1"/>
</dbReference>
<dbReference type="PANTHER" id="PTHR21349:SF0">
    <property type="entry name" value="LARGE RIBOSOMAL SUBUNIT PROTEIN BL21M"/>
    <property type="match status" value="1"/>
</dbReference>
<dbReference type="Pfam" id="PF00829">
    <property type="entry name" value="Ribosomal_L21p"/>
    <property type="match status" value="1"/>
</dbReference>
<dbReference type="SUPFAM" id="SSF141091">
    <property type="entry name" value="L21p-like"/>
    <property type="match status" value="1"/>
</dbReference>
<dbReference type="PROSITE" id="PS01169">
    <property type="entry name" value="RIBOSOMAL_L21"/>
    <property type="match status" value="1"/>
</dbReference>
<reference key="1">
    <citation type="journal article" date="2007" name="Proc. Natl. Acad. Sci. U.S.A.">
        <title>Genome sequencing reveals complex secondary metabolome in the marine actinomycete Salinispora tropica.</title>
        <authorList>
            <person name="Udwary D.W."/>
            <person name="Zeigler L."/>
            <person name="Asolkar R.N."/>
            <person name="Singan V."/>
            <person name="Lapidus A."/>
            <person name="Fenical W."/>
            <person name="Jensen P.R."/>
            <person name="Moore B.S."/>
        </authorList>
    </citation>
    <scope>NUCLEOTIDE SEQUENCE [LARGE SCALE GENOMIC DNA]</scope>
    <source>
        <strain>ATCC BAA-916 / DSM 44818 / JCM 13857 / NBRC 105044 / CNB-440</strain>
    </source>
</reference>
<comment type="function">
    <text evidence="1">This protein binds to 23S rRNA in the presence of protein L20.</text>
</comment>
<comment type="subunit">
    <text evidence="1">Part of the 50S ribosomal subunit. Contacts protein L20.</text>
</comment>
<comment type="similarity">
    <text evidence="1">Belongs to the bacterial ribosomal protein bL21 family.</text>
</comment>
<sequence length="104" mass="11076">MYAIVKTGGKQYKVAEGDVIEVEKLAGTPGDAVQLAAVLLVDGDDLVTDAAKLAKVEVSGEIAAHTKGPKIRIHKFKNKTGYHKRQGHRQPLTQVKVTGISSGK</sequence>
<protein>
    <recommendedName>
        <fullName evidence="1">Large ribosomal subunit protein bL21</fullName>
    </recommendedName>
    <alternativeName>
        <fullName evidence="2">50S ribosomal protein L21</fullName>
    </alternativeName>
</protein>
<keyword id="KW-1185">Reference proteome</keyword>
<keyword id="KW-0687">Ribonucleoprotein</keyword>
<keyword id="KW-0689">Ribosomal protein</keyword>
<keyword id="KW-0694">RNA-binding</keyword>
<keyword id="KW-0699">rRNA-binding</keyword>
<evidence type="ECO:0000255" key="1">
    <source>
        <dbReference type="HAMAP-Rule" id="MF_01363"/>
    </source>
</evidence>
<evidence type="ECO:0000305" key="2"/>